<reference key="1">
    <citation type="journal article" date="1993" name="Nucleic Acids Res.">
        <title>Sequence of the Rhizobium leguminosarum biovar phaseoli syrM gene.</title>
        <authorList>
            <person name="Michiels J."/>
            <person name="de Wilde P."/>
            <person name="Vanderleyden J."/>
        </authorList>
    </citation>
    <scope>NUCLEOTIDE SEQUENCE [GENOMIC DNA]</scope>
    <source>
        <strain>CNPAF512</strain>
    </source>
</reference>
<accession>Q08812</accession>
<dbReference type="EMBL" id="Z23013">
    <property type="protein sequence ID" value="CAA80556.1"/>
    <property type="molecule type" value="Genomic_DNA"/>
</dbReference>
<dbReference type="SMR" id="Q08812"/>
<dbReference type="GO" id="GO:0003677">
    <property type="term" value="F:DNA binding"/>
    <property type="evidence" value="ECO:0007669"/>
    <property type="project" value="UniProtKB-KW"/>
</dbReference>
<dbReference type="GO" id="GO:0003700">
    <property type="term" value="F:DNA-binding transcription factor activity"/>
    <property type="evidence" value="ECO:0007669"/>
    <property type="project" value="InterPro"/>
</dbReference>
<dbReference type="CDD" id="cd08467">
    <property type="entry name" value="PBP2_SyrM"/>
    <property type="match status" value="1"/>
</dbReference>
<dbReference type="Gene3D" id="3.40.190.10">
    <property type="entry name" value="Periplasmic binding protein-like II"/>
    <property type="match status" value="2"/>
</dbReference>
<dbReference type="Gene3D" id="1.10.10.10">
    <property type="entry name" value="Winged helix-like DNA-binding domain superfamily/Winged helix DNA-binding domain"/>
    <property type="match status" value="1"/>
</dbReference>
<dbReference type="InterPro" id="IPR050389">
    <property type="entry name" value="LysR-type_TF"/>
</dbReference>
<dbReference type="InterPro" id="IPR005119">
    <property type="entry name" value="LysR_subst-bd"/>
</dbReference>
<dbReference type="InterPro" id="IPR037417">
    <property type="entry name" value="SyrM_PBP2"/>
</dbReference>
<dbReference type="InterPro" id="IPR000847">
    <property type="entry name" value="Tscrpt_reg_HTH_LysR"/>
</dbReference>
<dbReference type="InterPro" id="IPR036388">
    <property type="entry name" value="WH-like_DNA-bd_sf"/>
</dbReference>
<dbReference type="InterPro" id="IPR036390">
    <property type="entry name" value="WH_DNA-bd_sf"/>
</dbReference>
<dbReference type="PANTHER" id="PTHR30118">
    <property type="entry name" value="HTH-TYPE TRANSCRIPTIONAL REGULATOR LEUO-RELATED"/>
    <property type="match status" value="1"/>
</dbReference>
<dbReference type="PANTHER" id="PTHR30118:SF15">
    <property type="entry name" value="TRANSCRIPTIONAL REGULATORY PROTEIN"/>
    <property type="match status" value="1"/>
</dbReference>
<dbReference type="Pfam" id="PF00126">
    <property type="entry name" value="HTH_1"/>
    <property type="match status" value="1"/>
</dbReference>
<dbReference type="Pfam" id="PF03466">
    <property type="entry name" value="LysR_substrate"/>
    <property type="match status" value="1"/>
</dbReference>
<dbReference type="SUPFAM" id="SSF53850">
    <property type="entry name" value="Periplasmic binding protein-like II"/>
    <property type="match status" value="1"/>
</dbReference>
<dbReference type="SUPFAM" id="SSF46785">
    <property type="entry name" value="Winged helix' DNA-binding domain"/>
    <property type="match status" value="1"/>
</dbReference>
<dbReference type="PROSITE" id="PS50931">
    <property type="entry name" value="HTH_LYSR"/>
    <property type="match status" value="1"/>
</dbReference>
<gene>
    <name type="primary">syrM</name>
</gene>
<protein>
    <recommendedName>
        <fullName>HTH-type transcriptional regulator SyrM</fullName>
    </recommendedName>
    <alternativeName>
        <fullName>Symbiotic regulator</fullName>
    </alternativeName>
</protein>
<keyword id="KW-0010">Activator</keyword>
<keyword id="KW-0238">DNA-binding</keyword>
<keyword id="KW-0536">Nodulation</keyword>
<keyword id="KW-0804">Transcription</keyword>
<keyword id="KW-0805">Transcription regulation</keyword>
<evidence type="ECO:0000255" key="1">
    <source>
        <dbReference type="PROSITE-ProRule" id="PRU00253"/>
    </source>
</evidence>
<evidence type="ECO:0000305" key="2"/>
<comment type="function">
    <text>Acts in trans to stimulate nod gene expression via nodD3 and exo gene expression via SyrA.</text>
</comment>
<comment type="similarity">
    <text evidence="2">Belongs to the LysR transcriptional regulatory family.</text>
</comment>
<comment type="caution">
    <text evidence="2">Strain CNPAF512 was originally thought to originate from R.leguminosarum bv phaseoli.</text>
</comment>
<name>SYRM_RHIET</name>
<organism>
    <name type="scientific">Rhizobium etli</name>
    <dbReference type="NCBI Taxonomy" id="29449"/>
    <lineage>
        <taxon>Bacteria</taxon>
        <taxon>Pseudomonadati</taxon>
        <taxon>Pseudomonadota</taxon>
        <taxon>Alphaproteobacteria</taxon>
        <taxon>Hyphomicrobiales</taxon>
        <taxon>Rhizobiaceae</taxon>
        <taxon>Rhizobium/Agrobacterium group</taxon>
        <taxon>Rhizobium</taxon>
    </lineage>
</organism>
<sequence>MNFMKRNVEKEVTDQLAYRRKMLQDWRGERLTGHQINLASIDLNLLVALEALLEYRNVTHAGQHIGRSQPAMSRALGRLRGLFNDDLLVRSSTGLIPTPQGEHLAQRLPSALRTIREMVTSRSVISKEWGRGATLAIPDHQALAVLPRLLPWLRERAPHLDTLACLPFDRAVRGLEQGDIDLAVGHIDVQLPGYFRRSLYTDRFACLLRHGHPALAQEWTIDNFATLRHAAISTDSPDHFGPIYDHLPNLRADRSPILFSSVLTAAVVASATDLVLLVPRRVATQVSAMLPLRVVDPPLEPAPYKVMLIWHERCHHDPQHKWLRKEVAAALETGAD</sequence>
<feature type="chain" id="PRO_0000105752" description="HTH-type transcriptional regulator SyrM">
    <location>
        <begin position="1"/>
        <end position="336"/>
    </location>
</feature>
<feature type="domain" description="HTH lysR-type" evidence="1">
    <location>
        <begin position="41"/>
        <end position="98"/>
    </location>
</feature>
<feature type="DNA-binding region" description="H-T-H motif" evidence="1">
    <location>
        <begin position="58"/>
        <end position="77"/>
    </location>
</feature>
<proteinExistence type="inferred from homology"/>